<proteinExistence type="inferred from homology"/>
<organism>
    <name type="scientific">Maize streak virus genotype A (isolate South Africa)</name>
    <name type="common">MSV</name>
    <dbReference type="NCBI Taxonomy" id="10824"/>
    <lineage>
        <taxon>Viruses</taxon>
        <taxon>Monodnaviria</taxon>
        <taxon>Shotokuvirae</taxon>
        <taxon>Cressdnaviricota</taxon>
        <taxon>Repensiviricetes</taxon>
        <taxon>Geplafuvirales</taxon>
        <taxon>Geminiviridae</taxon>
        <taxon>Mastrevirus</taxon>
        <taxon>Maize streak virus</taxon>
    </lineage>
</organism>
<sequence length="101" mass="10906">MDPQNALYYQPRVPTAAPTSGGVPWSRVGEVAILSFVALICFYLLYLWVLRDLILVLKARQGRSTEELIFGGQAVDRSNPIPNLPAPPSQGNPGPFVPGTG</sequence>
<reference key="1">
    <citation type="journal article" date="1988" name="Nucleic Acids Res.">
        <title>Infectivity and complete nucleotide sequence of the genome of a South African isolate of maize streak virus.</title>
        <authorList>
            <person name="Lazarowitz S.G."/>
        </authorList>
    </citation>
    <scope>NUCLEOTIDE SEQUENCE [GENOMIC DNA]</scope>
</reference>
<keyword id="KW-1043">Host membrane</keyword>
<keyword id="KW-0472">Membrane</keyword>
<keyword id="KW-1185">Reference proteome</keyword>
<keyword id="KW-0812">Transmembrane</keyword>
<keyword id="KW-1133">Transmembrane helix</keyword>
<keyword id="KW-0813">Transport</keyword>
<keyword id="KW-0916">Viral movement protein</keyword>
<organismHost>
    <name type="scientific">Avena sativa</name>
    <name type="common">Oat</name>
    <dbReference type="NCBI Taxonomy" id="4498"/>
</organismHost>
<organismHost>
    <name type="scientific">Axonopus compressus</name>
    <dbReference type="NCBI Taxonomy" id="217170"/>
</organismHost>
<organismHost>
    <name type="scientific">Cenchrus americanus</name>
    <name type="common">Pearl millet</name>
    <name type="synonym">Pennisetum glaucum</name>
    <dbReference type="NCBI Taxonomy" id="4543"/>
</organismHost>
<organismHost>
    <name type="scientific">Cenchrus polystachios</name>
    <dbReference type="NCBI Taxonomy" id="281129"/>
</organismHost>
<organismHost>
    <name type="scientific">Coix lacryma-jobi</name>
    <name type="common">Job's tears</name>
    <dbReference type="NCBI Taxonomy" id="4505"/>
</organismHost>
<organismHost>
    <name type="scientific">Dactyloctenium aegyptium</name>
    <dbReference type="NCBI Taxonomy" id="270102"/>
</organismHost>
<organismHost>
    <name type="scientific">Digitaria</name>
    <dbReference type="NCBI Taxonomy" id="66017"/>
</organismHost>
<organismHost>
    <name type="scientific">Echinochloa colona</name>
    <dbReference type="NCBI Taxonomy" id="90396"/>
</organismHost>
<organismHost>
    <name type="scientific">Eleusine coracana</name>
    <name type="common">Indian finger millet</name>
    <name type="synonym">Ragi</name>
    <dbReference type="NCBI Taxonomy" id="4511"/>
</organismHost>
<organismHost>
    <name type="scientific">Eleusine indica</name>
    <name type="common">Goosegrass</name>
    <name type="synonym">Cynosurus indicus</name>
    <dbReference type="NCBI Taxonomy" id="29674"/>
</organismHost>
<organismHost>
    <name type="scientific">Hordeum vulgare</name>
    <name type="common">Barley</name>
    <dbReference type="NCBI Taxonomy" id="4513"/>
</organismHost>
<organismHost>
    <name type="scientific">Megathyrsus maximus</name>
    <dbReference type="NCBI Taxonomy" id="59788"/>
</organismHost>
<organismHost>
    <name type="scientific">Melinis repens</name>
    <name type="common">Red Natal grass</name>
    <name type="synonym">Rhynchelytrum repens</name>
    <dbReference type="NCBI Taxonomy" id="29709"/>
</organismHost>
<organismHost>
    <name type="scientific">Oryza glaberrima</name>
    <name type="common">African rice</name>
    <dbReference type="NCBI Taxonomy" id="4538"/>
</organismHost>
<organismHost>
    <name type="scientific">Oryza sativa</name>
    <name type="common">Rice</name>
    <dbReference type="NCBI Taxonomy" id="4530"/>
</organismHost>
<organismHost>
    <name type="scientific">Paspalum conjugatum</name>
    <name type="common">Hilo grass</name>
    <dbReference type="NCBI Taxonomy" id="158143"/>
</organismHost>
<organismHost>
    <name type="scientific">Paspalum notatum</name>
    <name type="common">Bahia grass</name>
    <dbReference type="NCBI Taxonomy" id="147272"/>
</organismHost>
<organismHost>
    <name type="scientific">Paspalum scrobiculatum</name>
    <dbReference type="NCBI Taxonomy" id="173849"/>
</organismHost>
<organismHost>
    <name type="scientific">Rottboellia cochinchinensis</name>
    <dbReference type="NCBI Taxonomy" id="300125"/>
</organismHost>
<organismHost>
    <name type="scientific">Saccharum officinarum</name>
    <name type="common">Sugarcane</name>
    <dbReference type="NCBI Taxonomy" id="4547"/>
</organismHost>
<organismHost>
    <name type="scientific">Setaria barbata</name>
    <dbReference type="NCBI Taxonomy" id="192628"/>
</organismHost>
<organismHost>
    <name type="scientific">Triticum aestivum</name>
    <name type="common">Wheat</name>
    <dbReference type="NCBI Taxonomy" id="4565"/>
</organismHost>
<organismHost>
    <name type="scientific">Urochloa deflexa</name>
    <dbReference type="NCBI Taxonomy" id="240436"/>
</organismHost>
<organismHost>
    <name type="scientific">Zea mays</name>
    <name type="common">Maize</name>
    <dbReference type="NCBI Taxonomy" id="4577"/>
</organismHost>
<feature type="chain" id="PRO_0000222284" description="Movement protein">
    <location>
        <begin position="1"/>
        <end position="101"/>
    </location>
</feature>
<feature type="transmembrane region" description="Helical" evidence="2">
    <location>
        <begin position="30"/>
        <end position="50"/>
    </location>
</feature>
<feature type="region of interest" description="Disordered" evidence="3">
    <location>
        <begin position="75"/>
        <end position="101"/>
    </location>
</feature>
<evidence type="ECO:0000250" key="1"/>
<evidence type="ECO:0000255" key="2"/>
<evidence type="ECO:0000256" key="3">
    <source>
        <dbReference type="SAM" id="MobiDB-lite"/>
    </source>
</evidence>
<evidence type="ECO:0000305" key="4"/>
<accession>P14992</accession>
<protein>
    <recommendedName>
        <fullName>Movement protein</fullName>
        <shortName>MP</shortName>
    </recommendedName>
</protein>
<gene>
    <name type="ORF">V2</name>
</gene>
<dbReference type="EMBL" id="Y00514">
    <property type="protein sequence ID" value="CAA68570.1"/>
    <property type="molecule type" value="Genomic_DNA"/>
</dbReference>
<dbReference type="PIR" id="S04804">
    <property type="entry name" value="S04804"/>
</dbReference>
<dbReference type="SMR" id="P14992"/>
<dbReference type="Proteomes" id="UP000006541">
    <property type="component" value="Segment"/>
</dbReference>
<dbReference type="GO" id="GO:0033644">
    <property type="term" value="C:host cell membrane"/>
    <property type="evidence" value="ECO:0007669"/>
    <property type="project" value="UniProtKB-SubCell"/>
</dbReference>
<dbReference type="GO" id="GO:0016020">
    <property type="term" value="C:membrane"/>
    <property type="evidence" value="ECO:0007669"/>
    <property type="project" value="UniProtKB-KW"/>
</dbReference>
<dbReference type="GO" id="GO:0046740">
    <property type="term" value="P:transport of virus in host, cell to cell"/>
    <property type="evidence" value="ECO:0007669"/>
    <property type="project" value="UniProtKB-KW"/>
</dbReference>
<dbReference type="InterPro" id="IPR002621">
    <property type="entry name" value="Gemini_mov"/>
</dbReference>
<dbReference type="Pfam" id="PF01708">
    <property type="entry name" value="Gemini_mov"/>
    <property type="match status" value="1"/>
</dbReference>
<comment type="function">
    <text>Involved in the viral transport within, and between cells.</text>
</comment>
<comment type="subunit">
    <text evidence="1">Interacts with the capsid protein (CP). Part of a MP-CP-viral DNA complex (By similarity).</text>
</comment>
<comment type="subcellular location">
    <subcellularLocation>
        <location evidence="4">Host membrane</location>
        <topology evidence="4">Single-pass membrane protein</topology>
    </subcellularLocation>
</comment>
<comment type="similarity">
    <text evidence="4">Belongs to the mastrevirus movement protein family.</text>
</comment>
<name>MP_MSVS</name>